<evidence type="ECO:0000255" key="1">
    <source>
        <dbReference type="HAMAP-Rule" id="MF_01557"/>
    </source>
</evidence>
<protein>
    <recommendedName>
        <fullName evidence="1">Tagatose-6-phosphate kinase</fullName>
        <ecNumber evidence="1">2.7.1.144</ecNumber>
    </recommendedName>
    <alternativeName>
        <fullName evidence="1">Phosphotagatokinase</fullName>
    </alternativeName>
</protein>
<accession>P0DC12</accession>
<accession>Q878A2</accession>
<accession>Q8K5U8</accession>
<dbReference type="EC" id="2.7.1.144" evidence="1"/>
<dbReference type="EMBL" id="AE014074">
    <property type="protein sequence ID" value="AAM80264.1"/>
    <property type="molecule type" value="Genomic_DNA"/>
</dbReference>
<dbReference type="RefSeq" id="WP_011055004.1">
    <property type="nucleotide sequence ID" value="NC_004070.1"/>
</dbReference>
<dbReference type="SMR" id="P0DC12"/>
<dbReference type="KEGG" id="spg:SpyM3_1657"/>
<dbReference type="HOGENOM" id="CLU_050013_5_0_9"/>
<dbReference type="UniPathway" id="UPA00704">
    <property type="reaction ID" value="UER00715"/>
</dbReference>
<dbReference type="Proteomes" id="UP000000564">
    <property type="component" value="Chromosome"/>
</dbReference>
<dbReference type="GO" id="GO:0005829">
    <property type="term" value="C:cytosol"/>
    <property type="evidence" value="ECO:0007669"/>
    <property type="project" value="TreeGrafter"/>
</dbReference>
<dbReference type="GO" id="GO:0005524">
    <property type="term" value="F:ATP binding"/>
    <property type="evidence" value="ECO:0007669"/>
    <property type="project" value="UniProtKB-KW"/>
</dbReference>
<dbReference type="GO" id="GO:0008443">
    <property type="term" value="F:phosphofructokinase activity"/>
    <property type="evidence" value="ECO:0007669"/>
    <property type="project" value="TreeGrafter"/>
</dbReference>
<dbReference type="GO" id="GO:0009024">
    <property type="term" value="F:tagatose-6-phosphate kinase activity"/>
    <property type="evidence" value="ECO:0007669"/>
    <property type="project" value="UniProtKB-UniRule"/>
</dbReference>
<dbReference type="GO" id="GO:2001059">
    <property type="term" value="P:D-tagatose 6-phosphate catabolic process"/>
    <property type="evidence" value="ECO:0007669"/>
    <property type="project" value="UniProtKB-UniRule"/>
</dbReference>
<dbReference type="GO" id="GO:0019512">
    <property type="term" value="P:lactose catabolic process via tagatose-6-phosphate"/>
    <property type="evidence" value="ECO:0007669"/>
    <property type="project" value="InterPro"/>
</dbReference>
<dbReference type="CDD" id="cd01164">
    <property type="entry name" value="FruK_PfkB_like"/>
    <property type="match status" value="1"/>
</dbReference>
<dbReference type="FunFam" id="3.40.1190.20:FF:000001">
    <property type="entry name" value="Phosphofructokinase"/>
    <property type="match status" value="1"/>
</dbReference>
<dbReference type="Gene3D" id="3.40.1190.20">
    <property type="match status" value="1"/>
</dbReference>
<dbReference type="HAMAP" id="MF_01557">
    <property type="entry name" value="LacC"/>
    <property type="match status" value="1"/>
</dbReference>
<dbReference type="InterPro" id="IPR005926">
    <property type="entry name" value="LacC"/>
</dbReference>
<dbReference type="InterPro" id="IPR011611">
    <property type="entry name" value="PfkB_dom"/>
</dbReference>
<dbReference type="InterPro" id="IPR029056">
    <property type="entry name" value="Ribokinase-like"/>
</dbReference>
<dbReference type="InterPro" id="IPR017583">
    <property type="entry name" value="Tagatose/fructose_Pkinase"/>
</dbReference>
<dbReference type="NCBIfam" id="TIGR03168">
    <property type="entry name" value="1-PFK"/>
    <property type="match status" value="1"/>
</dbReference>
<dbReference type="NCBIfam" id="TIGR01231">
    <property type="entry name" value="lacC"/>
    <property type="match status" value="1"/>
</dbReference>
<dbReference type="NCBIfam" id="NF010033">
    <property type="entry name" value="PRK13508.1"/>
    <property type="match status" value="1"/>
</dbReference>
<dbReference type="PANTHER" id="PTHR46566:SF5">
    <property type="entry name" value="1-PHOSPHOFRUCTOKINASE"/>
    <property type="match status" value="1"/>
</dbReference>
<dbReference type="PANTHER" id="PTHR46566">
    <property type="entry name" value="1-PHOSPHOFRUCTOKINASE-RELATED"/>
    <property type="match status" value="1"/>
</dbReference>
<dbReference type="Pfam" id="PF00294">
    <property type="entry name" value="PfkB"/>
    <property type="match status" value="1"/>
</dbReference>
<dbReference type="PIRSF" id="PIRSF000535">
    <property type="entry name" value="1PFK/6PFK/LacC"/>
    <property type="match status" value="1"/>
</dbReference>
<dbReference type="SUPFAM" id="SSF53613">
    <property type="entry name" value="Ribokinase-like"/>
    <property type="match status" value="1"/>
</dbReference>
<keyword id="KW-0067">ATP-binding</keyword>
<keyword id="KW-0418">Kinase</keyword>
<keyword id="KW-0423">Lactose metabolism</keyword>
<keyword id="KW-0547">Nucleotide-binding</keyword>
<keyword id="KW-0808">Transferase</keyword>
<comment type="catalytic activity">
    <reaction evidence="1">
        <text>D-tagatofuranose 6-phosphate + ATP = D-tagatofuranose 1,6-bisphosphate + ADP + H(+)</text>
        <dbReference type="Rhea" id="RHEA:12420"/>
        <dbReference type="ChEBI" id="CHEBI:15378"/>
        <dbReference type="ChEBI" id="CHEBI:30616"/>
        <dbReference type="ChEBI" id="CHEBI:58694"/>
        <dbReference type="ChEBI" id="CHEBI:58695"/>
        <dbReference type="ChEBI" id="CHEBI:456216"/>
        <dbReference type="EC" id="2.7.1.144"/>
    </reaction>
</comment>
<comment type="pathway">
    <text evidence="1">Carbohydrate metabolism; D-tagatose 6-phosphate degradation; D-glyceraldehyde 3-phosphate and glycerone phosphate from D-tagatose 6-phosphate: step 1/2.</text>
</comment>
<comment type="similarity">
    <text evidence="1">Belongs to the carbohydrate kinase PfkB family. LacC subfamily.</text>
</comment>
<reference key="1">
    <citation type="journal article" date="2002" name="Proc. Natl. Acad. Sci. U.S.A.">
        <title>Genome sequence of a serotype M3 strain of group A Streptococcus: phage-encoded toxins, the high-virulence phenotype, and clone emergence.</title>
        <authorList>
            <person name="Beres S.B."/>
            <person name="Sylva G.L."/>
            <person name="Barbian K.D."/>
            <person name="Lei B."/>
            <person name="Hoff J.S."/>
            <person name="Mammarella N.D."/>
            <person name="Liu M.-Y."/>
            <person name="Smoot J.C."/>
            <person name="Porcella S.F."/>
            <person name="Parkins L.D."/>
            <person name="Campbell D.S."/>
            <person name="Smith T.M."/>
            <person name="McCormick J.K."/>
            <person name="Leung D.Y.M."/>
            <person name="Schlievert P.M."/>
            <person name="Musser J.M."/>
        </authorList>
    </citation>
    <scope>NUCLEOTIDE SEQUENCE [LARGE SCALE GENOMIC DNA]</scope>
    <source>
        <strain>ATCC BAA-595 / MGAS315</strain>
    </source>
</reference>
<gene>
    <name evidence="1" type="primary">lacC</name>
    <name type="ordered locus">SpyM3_1657</name>
</gene>
<name>LACC_STRP3</name>
<sequence length="309" mass="33466">MILTVTLNPAIDVSYPLDELKCDTVNRVVDVTKTPGGKGLNVCRVLNEFGETVKATGCIGGESGDFIINHLPDSILSRFYKISGYTRTCIAILHEGNQTEILEKGPMLSVDEIDGFTHHFKYLLNDVDVVTLSGSLPAGMPDDYYQKLIGIANLNGKKTVLDCSGNALEAVLKGDSKPTVIKPNLEELSQLLGKEMTKDFKALKAVLQDELFEGIEWIIVSLGADGVFAKHKDTFYNVDIPKIKIVSAVGSGDSTVAGIASGLANDEDDRALLTKANVLGMLNAQEKTTGHVNMANYDKLYQSIKVKEV</sequence>
<feature type="chain" id="PRO_0000203936" description="Tagatose-6-phosphate kinase">
    <location>
        <begin position="1"/>
        <end position="309"/>
    </location>
</feature>
<proteinExistence type="inferred from homology"/>
<organism>
    <name type="scientific">Streptococcus pyogenes serotype M3 (strain ATCC BAA-595 / MGAS315)</name>
    <dbReference type="NCBI Taxonomy" id="198466"/>
    <lineage>
        <taxon>Bacteria</taxon>
        <taxon>Bacillati</taxon>
        <taxon>Bacillota</taxon>
        <taxon>Bacilli</taxon>
        <taxon>Lactobacillales</taxon>
        <taxon>Streptococcaceae</taxon>
        <taxon>Streptococcus</taxon>
    </lineage>
</organism>